<keyword id="KW-0238">DNA-binding</keyword>
<keyword id="KW-0371">Homeobox</keyword>
<keyword id="KW-1017">Isopeptide bond</keyword>
<keyword id="KW-0479">Metal-binding</keyword>
<keyword id="KW-0539">Nucleus</keyword>
<keyword id="KW-0597">Phosphoprotein</keyword>
<keyword id="KW-1185">Reference proteome</keyword>
<keyword id="KW-0677">Repeat</keyword>
<keyword id="KW-0678">Repressor</keyword>
<keyword id="KW-0804">Transcription</keyword>
<keyword id="KW-0805">Transcription regulation</keyword>
<keyword id="KW-0832">Ubl conjugation</keyword>
<keyword id="KW-0862">Zinc</keyword>
<keyword id="KW-0863">Zinc-finger</keyword>
<evidence type="ECO:0000250" key="1"/>
<evidence type="ECO:0000250" key="2">
    <source>
        <dbReference type="UniProtKB" id="Q9UKY1"/>
    </source>
</evidence>
<evidence type="ECO:0000255" key="3">
    <source>
        <dbReference type="PROSITE-ProRule" id="PRU00042"/>
    </source>
</evidence>
<evidence type="ECO:0000255" key="4">
    <source>
        <dbReference type="PROSITE-ProRule" id="PRU00108"/>
    </source>
</evidence>
<evidence type="ECO:0000256" key="5">
    <source>
        <dbReference type="SAM" id="MobiDB-lite"/>
    </source>
</evidence>
<evidence type="ECO:0000269" key="6">
    <source>
    </source>
</evidence>
<evidence type="ECO:0000305" key="7"/>
<evidence type="ECO:0000312" key="8">
    <source>
        <dbReference type="EMBL" id="BAB85763.1"/>
    </source>
</evidence>
<evidence type="ECO:0007744" key="9">
    <source>
    </source>
</evidence>
<protein>
    <recommendedName>
        <fullName>Zinc fingers and homeoboxes protein 1</fullName>
    </recommendedName>
</protein>
<sequence length="873" mass="97570">MASRRKSTTPCMVLASEQDPDLELISDLEEGPPVLTPVENARAESVSSDEEVHESVDSDNQQNKKVEGGYECKYCTFQTPDLNMFTFHVDSEHPNVVLNSSYVCVECNFLTKRYDALSEHNLKYHPGEENFKLTMVKRNNQTIFEQTINDLTFDGSFVKEENTEQGESIDVSSSGISISKTPIMKMMKNKVENKRITVHHNSAEGTSEEKENGVKASREENAENTSSSASESNTSTSTVNQVHPSPAGTVVTPTAVLPGLAQVITAVSAQQNSNLVPKVLIPVNSIPTYNAALDNNPLLLNTYNKFPYPTMSEITVLSAQAKYTEEQIKIWFSAQRLKHGVSWTPEEVEEARRKQFNGTVHTVPQTITVIPTHISTGSNGLPSILQTCQIVGQPGLVLTQVAGANTLPVTAPIALTVAGVPNQTNVQKSQVPAAQPAAETKPATAAVPSSPSVRPEAALVNPDSFGIRAKKTKEQLAELKVSYLKNQFPHDSEIIRLMKITGLTKGEIKKWFSDTRYNQRNSKSNQCLHLNNDSSATIIIDSSDETPEPPAAAASQPKQSWNPFPDFAPQKFKEKTAEQLRVLQASFLNSSVLTDEELNRLRAQTKLTRREIDAWFTEKNKTKALKDEKVEVDESNVGSSKEEPGENSPGDEAVAPKSAGTGKICKKTPEQLHMLKSAFVRTQWPSPEEYDKLAEESGLARTDIVSWFGDTRYAWKNGNLKWYYYYQSSNSSSLNGLSSLRKRGRGRPKGRGRGRPRGRPRGGKRMNTWDRVPSLIKFKTGTAILKDYYLKHKFLNEQDLDELVNRSHMGYEQVREWFAERQRRSELGIELFEENEEEDEVIDDQEEDEEETDDSDTWEPPRHVKRKLSKSDD</sequence>
<name>ZHX1_RAT</name>
<dbReference type="EMBL" id="AB072439">
    <property type="protein sequence ID" value="BAB85763.1"/>
    <property type="molecule type" value="mRNA"/>
</dbReference>
<dbReference type="RefSeq" id="NP_598304.1">
    <property type="nucleotide sequence ID" value="NM_133620.1"/>
</dbReference>
<dbReference type="SMR" id="Q8R515"/>
<dbReference type="BioGRID" id="251160">
    <property type="interactions" value="2"/>
</dbReference>
<dbReference type="FunCoup" id="Q8R515">
    <property type="interactions" value="2263"/>
</dbReference>
<dbReference type="IntAct" id="Q8R515">
    <property type="interactions" value="1"/>
</dbReference>
<dbReference type="MINT" id="Q8R515"/>
<dbReference type="STRING" id="10116.ENSRNOP00000008454"/>
<dbReference type="iPTMnet" id="Q8R515"/>
<dbReference type="PhosphoSitePlus" id="Q8R515"/>
<dbReference type="PaxDb" id="10116-ENSRNOP00000008454"/>
<dbReference type="GeneID" id="171159"/>
<dbReference type="KEGG" id="rno:171159"/>
<dbReference type="UCSC" id="RGD:620010">
    <property type="organism name" value="rat"/>
</dbReference>
<dbReference type="AGR" id="RGD:620010"/>
<dbReference type="CTD" id="11244"/>
<dbReference type="RGD" id="620010">
    <property type="gene designation" value="Zhx1"/>
</dbReference>
<dbReference type="eggNOG" id="ENOG502QT3D">
    <property type="taxonomic scope" value="Eukaryota"/>
</dbReference>
<dbReference type="InParanoid" id="Q8R515"/>
<dbReference type="OrthoDB" id="6159439at2759"/>
<dbReference type="PhylomeDB" id="Q8R515"/>
<dbReference type="PRO" id="PR:Q8R515"/>
<dbReference type="Proteomes" id="UP000002494">
    <property type="component" value="Unplaced"/>
</dbReference>
<dbReference type="GO" id="GO:0005634">
    <property type="term" value="C:nucleus"/>
    <property type="evidence" value="ECO:0000314"/>
    <property type="project" value="UniProtKB"/>
</dbReference>
<dbReference type="GO" id="GO:0003677">
    <property type="term" value="F:DNA binding"/>
    <property type="evidence" value="ECO:0000314"/>
    <property type="project" value="RGD"/>
</dbReference>
<dbReference type="GO" id="GO:0003700">
    <property type="term" value="F:DNA-binding transcription factor activity"/>
    <property type="evidence" value="ECO:0000266"/>
    <property type="project" value="RGD"/>
</dbReference>
<dbReference type="GO" id="GO:0000981">
    <property type="term" value="F:DNA-binding transcription factor activity, RNA polymerase II-specific"/>
    <property type="evidence" value="ECO:0000318"/>
    <property type="project" value="GO_Central"/>
</dbReference>
<dbReference type="GO" id="GO:0046982">
    <property type="term" value="F:protein heterodimerization activity"/>
    <property type="evidence" value="ECO:0000250"/>
    <property type="project" value="UniProtKB"/>
</dbReference>
<dbReference type="GO" id="GO:0008270">
    <property type="term" value="F:zinc ion binding"/>
    <property type="evidence" value="ECO:0007669"/>
    <property type="project" value="UniProtKB-KW"/>
</dbReference>
<dbReference type="GO" id="GO:0045892">
    <property type="term" value="P:negative regulation of DNA-templated transcription"/>
    <property type="evidence" value="ECO:0000250"/>
    <property type="project" value="UniProtKB"/>
</dbReference>
<dbReference type="GO" id="GO:0000122">
    <property type="term" value="P:negative regulation of transcription by RNA polymerase II"/>
    <property type="evidence" value="ECO:0000250"/>
    <property type="project" value="UniProtKB"/>
</dbReference>
<dbReference type="GO" id="GO:0006355">
    <property type="term" value="P:regulation of DNA-templated transcription"/>
    <property type="evidence" value="ECO:0000314"/>
    <property type="project" value="RGD"/>
</dbReference>
<dbReference type="GO" id="GO:0006357">
    <property type="term" value="P:regulation of transcription by RNA polymerase II"/>
    <property type="evidence" value="ECO:0000318"/>
    <property type="project" value="GO_Central"/>
</dbReference>
<dbReference type="CDD" id="cd00086">
    <property type="entry name" value="homeodomain"/>
    <property type="match status" value="5"/>
</dbReference>
<dbReference type="FunFam" id="1.10.10.60:FF:000262">
    <property type="entry name" value="Zinc fingers and homeoboxes 1"/>
    <property type="match status" value="1"/>
</dbReference>
<dbReference type="FunFam" id="1.10.10.60:FF:000235">
    <property type="entry name" value="Zinc fingers and homeoboxes protein 1"/>
    <property type="match status" value="1"/>
</dbReference>
<dbReference type="FunFam" id="1.10.10.60:FF:000240">
    <property type="entry name" value="Zinc fingers and homeoboxes protein 1"/>
    <property type="match status" value="1"/>
</dbReference>
<dbReference type="FunFam" id="3.30.160.60:FF:000296">
    <property type="entry name" value="Zinc fingers and homeoboxes protein 1"/>
    <property type="match status" value="1"/>
</dbReference>
<dbReference type="FunFam" id="1.10.10.60:FF:000237">
    <property type="entry name" value="zinc fingers and homeoboxes protein 1"/>
    <property type="match status" value="1"/>
</dbReference>
<dbReference type="FunFam" id="1.10.10.60:FF:000133">
    <property type="entry name" value="zinc fingers and homeoboxes protein 3"/>
    <property type="match status" value="1"/>
</dbReference>
<dbReference type="Gene3D" id="3.30.160.60">
    <property type="entry name" value="Classic Zinc Finger"/>
    <property type="match status" value="1"/>
</dbReference>
<dbReference type="Gene3D" id="1.10.10.60">
    <property type="entry name" value="Homeodomain-like"/>
    <property type="match status" value="5"/>
</dbReference>
<dbReference type="InterPro" id="IPR001356">
    <property type="entry name" value="HD"/>
</dbReference>
<dbReference type="InterPro" id="IPR009057">
    <property type="entry name" value="Homeodomain-like_sf"/>
</dbReference>
<dbReference type="InterPro" id="IPR024578">
    <property type="entry name" value="Homez_homeobox_dom"/>
</dbReference>
<dbReference type="InterPro" id="IPR041057">
    <property type="entry name" value="ZHX_Znf_C2H2"/>
</dbReference>
<dbReference type="InterPro" id="IPR036236">
    <property type="entry name" value="Znf_C2H2_sf"/>
</dbReference>
<dbReference type="InterPro" id="IPR013087">
    <property type="entry name" value="Znf_C2H2_type"/>
</dbReference>
<dbReference type="PANTHER" id="PTHR15467:SF4">
    <property type="entry name" value="ZINC FINGERS AND HOMEOBOXES PROTEIN 1"/>
    <property type="match status" value="1"/>
</dbReference>
<dbReference type="PANTHER" id="PTHR15467">
    <property type="entry name" value="ZINC-FINGERS AND HOMEOBOXES RELATED"/>
    <property type="match status" value="1"/>
</dbReference>
<dbReference type="Pfam" id="PF00046">
    <property type="entry name" value="Homeodomain"/>
    <property type="match status" value="4"/>
</dbReference>
<dbReference type="Pfam" id="PF11569">
    <property type="entry name" value="Homez"/>
    <property type="match status" value="1"/>
</dbReference>
<dbReference type="Pfam" id="PF18387">
    <property type="entry name" value="zf_C2H2_ZHX"/>
    <property type="match status" value="1"/>
</dbReference>
<dbReference type="SMART" id="SM00389">
    <property type="entry name" value="HOX"/>
    <property type="match status" value="5"/>
</dbReference>
<dbReference type="SMART" id="SM00355">
    <property type="entry name" value="ZnF_C2H2"/>
    <property type="match status" value="2"/>
</dbReference>
<dbReference type="SUPFAM" id="SSF57667">
    <property type="entry name" value="beta-beta-alpha zinc fingers"/>
    <property type="match status" value="2"/>
</dbReference>
<dbReference type="SUPFAM" id="SSF46689">
    <property type="entry name" value="Homeodomain-like"/>
    <property type="match status" value="5"/>
</dbReference>
<dbReference type="PROSITE" id="PS50071">
    <property type="entry name" value="HOMEOBOX_2"/>
    <property type="match status" value="4"/>
</dbReference>
<dbReference type="PROSITE" id="PS50157">
    <property type="entry name" value="ZINC_FINGER_C2H2_2"/>
    <property type="match status" value="1"/>
</dbReference>
<accession>Q8R515</accession>
<reference evidence="7" key="1">
    <citation type="journal article" date="2002" name="Gene">
        <title>Rat zinc-fingers and homeoboxes 1 (ZHX1), a nuclear factor-YA-interacting nuclear protein, forms a homodimer.</title>
        <authorList>
            <person name="Hirano S."/>
            <person name="Yamada K."/>
            <person name="Kawata H."/>
            <person name="Shou Z."/>
            <person name="Mizutani T."/>
            <person name="Yazawa T."/>
            <person name="Kajitani T."/>
            <person name="Sekiguchi T."/>
            <person name="Yoshino M."/>
            <person name="Shigematsu Y."/>
            <person name="Mayumi M."/>
            <person name="Miyamoto K."/>
        </authorList>
    </citation>
    <scope>NUCLEOTIDE SEQUENCE [MRNA]</scope>
    <scope>HOMODIMERIZATION</scope>
    <scope>SUBCELLULAR LOCATION</scope>
    <scope>TISSUE SPECIFICITY</scope>
    <scope>INDUCTION</scope>
    <source>
        <tissue evidence="8">Ovary</tissue>
    </source>
</reference>
<reference key="2">
    <citation type="journal article" date="2012" name="Nat. Commun.">
        <title>Quantitative maps of protein phosphorylation sites across 14 different rat organs and tissues.</title>
        <authorList>
            <person name="Lundby A."/>
            <person name="Secher A."/>
            <person name="Lage K."/>
            <person name="Nordsborg N.B."/>
            <person name="Dmytriyev A."/>
            <person name="Lundby C."/>
            <person name="Olsen J.V."/>
        </authorList>
    </citation>
    <scope>PHOSPHORYLATION [LARGE SCALE ANALYSIS] AT SER-47 AND SER-48</scope>
    <scope>IDENTIFICATION BY MASS SPECTROMETRY [LARGE SCALE ANALYSIS]</scope>
</reference>
<proteinExistence type="evidence at protein level"/>
<organism evidence="8">
    <name type="scientific">Rattus norvegicus</name>
    <name type="common">Rat</name>
    <dbReference type="NCBI Taxonomy" id="10116"/>
    <lineage>
        <taxon>Eukaryota</taxon>
        <taxon>Metazoa</taxon>
        <taxon>Chordata</taxon>
        <taxon>Craniata</taxon>
        <taxon>Vertebrata</taxon>
        <taxon>Euteleostomi</taxon>
        <taxon>Mammalia</taxon>
        <taxon>Eutheria</taxon>
        <taxon>Euarchontoglires</taxon>
        <taxon>Glires</taxon>
        <taxon>Rodentia</taxon>
        <taxon>Myomorpha</taxon>
        <taxon>Muroidea</taxon>
        <taxon>Muridae</taxon>
        <taxon>Murinae</taxon>
        <taxon>Rattus</taxon>
    </lineage>
</organism>
<comment type="function">
    <text evidence="1">Acts as a transcriptional repressor. Increases DNMT3B-mediated repressive transcriptional activity when DNMT3B is tethered to DNA. May link molecule between DNMT3B and other co-repressor proteins (By similarity).</text>
</comment>
<comment type="subunit">
    <text evidence="1">Forms homodimers. Heterodimer (via HD1 domain) with ZHX2 (via HD1 domain). Also forms a heterodimer with ZHX3 which is a prerequisite for repressor activity. Interacts with ATF7IP and NFYA. Interacts (via homeobox domains) with DNMT3B (via PWWP domain) (By similarity).</text>
</comment>
<comment type="subcellular location">
    <subcellularLocation>
        <location evidence="4 6">Nucleus</location>
    </subcellularLocation>
    <text evidence="1">Colocalized in the nucleus with DNMT3B.</text>
</comment>
<comment type="tissue specificity">
    <text evidence="6">Ubiquitously expressed.</text>
</comment>
<comment type="induction">
    <text evidence="6">Not induced by gonadotropins.</text>
</comment>
<comment type="similarity">
    <text evidence="7">Belongs to the ZHX family.</text>
</comment>
<feature type="chain" id="PRO_0000049390" description="Zinc fingers and homeoboxes protein 1">
    <location>
        <begin position="1"/>
        <end position="873"/>
    </location>
</feature>
<feature type="zinc finger region" description="C2H2-type 1" evidence="3 7">
    <location>
        <begin position="70"/>
        <end position="93"/>
    </location>
</feature>
<feature type="zinc finger region" description="C2H2-type 2" evidence="3 7">
    <location>
        <begin position="102"/>
        <end position="125"/>
    </location>
</feature>
<feature type="DNA-binding region" description="Homeobox 1" evidence="4 7">
    <location>
        <begin position="284"/>
        <end position="346"/>
    </location>
</feature>
<feature type="DNA-binding region" description="Homeobox 2" evidence="4 7">
    <location>
        <begin position="464"/>
        <end position="526"/>
    </location>
</feature>
<feature type="DNA-binding region" description="Homeobox 3" evidence="4 7">
    <location>
        <begin position="569"/>
        <end position="631"/>
    </location>
</feature>
<feature type="DNA-binding region" description="Homeobox 4" evidence="4 7">
    <location>
        <begin position="660"/>
        <end position="722"/>
    </location>
</feature>
<feature type="DNA-binding region" description="Homeobox 5" evidence="4 7">
    <location>
        <begin position="777"/>
        <end position="832"/>
    </location>
</feature>
<feature type="region of interest" description="Disordered" evidence="5">
    <location>
        <begin position="1"/>
        <end position="63"/>
    </location>
</feature>
<feature type="region of interest" description="Disordered" evidence="5">
    <location>
        <begin position="198"/>
        <end position="247"/>
    </location>
</feature>
<feature type="region of interest" description="Required for interaction with NFYA" evidence="1">
    <location>
        <begin position="272"/>
        <end position="564"/>
    </location>
</feature>
<feature type="region of interest" description="Required for dimerization" evidence="1">
    <location>
        <begin position="272"/>
        <end position="432"/>
    </location>
</feature>
<feature type="region of interest" description="Disordered" evidence="5">
    <location>
        <begin position="430"/>
        <end position="455"/>
    </location>
</feature>
<feature type="region of interest" description="Disordered" evidence="5">
    <location>
        <begin position="540"/>
        <end position="568"/>
    </location>
</feature>
<feature type="region of interest" description="Disordered" evidence="5">
    <location>
        <begin position="627"/>
        <end position="664"/>
    </location>
</feature>
<feature type="region of interest" description="Disordered" evidence="5">
    <location>
        <begin position="731"/>
        <end position="767"/>
    </location>
</feature>
<feature type="region of interest" description="Required for nuclear localization" evidence="1">
    <location>
        <begin position="734"/>
        <end position="768"/>
    </location>
</feature>
<feature type="region of interest" description="Disordered" evidence="5">
    <location>
        <begin position="829"/>
        <end position="873"/>
    </location>
</feature>
<feature type="region of interest" description="Required for repressor activity" evidence="1">
    <location>
        <begin position="831"/>
        <end position="873"/>
    </location>
</feature>
<feature type="compositionally biased region" description="Acidic residues" evidence="5">
    <location>
        <begin position="18"/>
        <end position="30"/>
    </location>
</feature>
<feature type="compositionally biased region" description="Basic and acidic residues" evidence="5">
    <location>
        <begin position="207"/>
        <end position="221"/>
    </location>
</feature>
<feature type="compositionally biased region" description="Low complexity" evidence="5">
    <location>
        <begin position="223"/>
        <end position="238"/>
    </location>
</feature>
<feature type="compositionally biased region" description="Low complexity" evidence="5">
    <location>
        <begin position="551"/>
        <end position="560"/>
    </location>
</feature>
<feature type="compositionally biased region" description="Basic residues" evidence="5">
    <location>
        <begin position="740"/>
        <end position="764"/>
    </location>
</feature>
<feature type="compositionally biased region" description="Acidic residues" evidence="5">
    <location>
        <begin position="831"/>
        <end position="857"/>
    </location>
</feature>
<feature type="compositionally biased region" description="Basic residues" evidence="5">
    <location>
        <begin position="863"/>
        <end position="873"/>
    </location>
</feature>
<feature type="modified residue" description="Phosphothreonine" evidence="2">
    <location>
        <position position="36"/>
    </location>
</feature>
<feature type="modified residue" description="Phosphoserine" evidence="2">
    <location>
        <position position="45"/>
    </location>
</feature>
<feature type="modified residue" description="Phosphoserine" evidence="9">
    <location>
        <position position="47"/>
    </location>
</feature>
<feature type="modified residue" description="Phosphoserine" evidence="9">
    <location>
        <position position="48"/>
    </location>
</feature>
<feature type="modified residue" description="Phosphoserine" evidence="2">
    <location>
        <position position="202"/>
    </location>
</feature>
<feature type="modified residue" description="Phosphoserine" evidence="2">
    <location>
        <position position="648"/>
    </location>
</feature>
<feature type="modified residue" description="Phosphoserine" evidence="2">
    <location>
        <position position="774"/>
    </location>
</feature>
<feature type="cross-link" description="Glycyl lysine isopeptide (Lys-Gly) (interchain with G-Cter in SUMO2)" evidence="2">
    <location>
        <position position="159"/>
    </location>
</feature>
<feature type="cross-link" description="Glycyl lysine isopeptide (Lys-Gly) (interchain with G-Cter in SUMO2)" evidence="2">
    <location>
        <position position="441"/>
    </location>
</feature>
<feature type="cross-link" description="Glycyl lysine isopeptide (Lys-Gly) (interchain with G-Cter in SUMO2)" evidence="2">
    <location>
        <position position="485"/>
    </location>
</feature>
<feature type="cross-link" description="Glycyl lysine isopeptide (Lys-Gly) (interchain with G-Cter in SUMO2)" evidence="2">
    <location>
        <position position="629"/>
    </location>
</feature>
<gene>
    <name type="primary">Zhx1</name>
</gene>